<accession>P06854</accession>
<organismHost>
    <name type="scientific">Saimiri sciureus</name>
    <name type="common">Common squirrel monkey</name>
    <dbReference type="NCBI Taxonomy" id="9521"/>
</organismHost>
<evidence type="ECO:0000250" key="1">
    <source>
        <dbReference type="UniProtKB" id="P0A884"/>
    </source>
</evidence>
<evidence type="ECO:0000305" key="2"/>
<gene>
    <name type="primary">70</name>
    <name type="synonym">ECLF4</name>
</gene>
<reference key="1">
    <citation type="journal article" date="1986" name="Proc. Natl. Acad. Sci. U.S.A.">
        <title>The A+T-rich genome of Herpesvirus saimiri contains a highly conserved gene for thymidylate synthase.</title>
        <authorList>
            <person name="Honess R.W."/>
            <person name="Bodemer W."/>
            <person name="Cameron K.R."/>
            <person name="Niller H.H."/>
            <person name="Fleckenstein B."/>
            <person name="Randall R.E."/>
        </authorList>
    </citation>
    <scope>NUCLEOTIDE SEQUENCE [GENOMIC DNA]</scope>
</reference>
<reference key="2">
    <citation type="journal article" date="1986" name="J. Virol.">
        <title>Organization of the thymidylate synthase gene of herpesvirus saimiri.</title>
        <authorList>
            <person name="Bodemer W."/>
            <person name="Niller H.H."/>
            <person name="Nitsche N."/>
            <person name="Scholz B."/>
            <person name="Fleckenstein B."/>
        </authorList>
    </citation>
    <scope>NUCLEOTIDE SEQUENCE [GENOMIC DNA]</scope>
</reference>
<reference key="3">
    <citation type="journal article" date="1992" name="J. Virol.">
        <title>Primary structure of the herpesvirus saimiri genome.</title>
        <authorList>
            <person name="Albrecht J.-C."/>
            <person name="Nicholas J."/>
            <person name="Biller D."/>
            <person name="Cameron K.R."/>
            <person name="Biesinger B."/>
            <person name="Newman C."/>
            <person name="Wittmann S."/>
            <person name="Craxton M.A."/>
            <person name="Coleman H."/>
            <person name="Fleckenstein B."/>
            <person name="Honess R.W."/>
        </authorList>
    </citation>
    <scope>NUCLEOTIDE SEQUENCE [LARGE SCALE GENOMIC DNA]</scope>
</reference>
<reference key="4">
    <citation type="journal article" date="1992" name="Virology">
        <title>Analysis of nucleotide sequence of the rightmost 43 kbp of herpesvirus saimiri (HVS) L-DNA: general conservation of genetic organization between HVS and Epstein-Barr virus.</title>
        <authorList>
            <person name="Nicholas J."/>
            <person name="Cameron K.R."/>
            <person name="Coleman H."/>
            <person name="Newman C."/>
            <person name="Honess R.W."/>
        </authorList>
    </citation>
    <scope>NUCLEOTIDE SEQUENCE [GENOMIC DNA]</scope>
</reference>
<protein>
    <recommendedName>
        <fullName>Thymidylate synthase</fullName>
        <shortName>TS</shortName>
        <shortName>TSase</shortName>
        <ecNumber>2.1.1.45</ecNumber>
    </recommendedName>
</protein>
<comment type="catalytic activity">
    <reaction>
        <text>dUMP + (6R)-5,10-methylene-5,6,7,8-tetrahydrofolate = 7,8-dihydrofolate + dTMP</text>
        <dbReference type="Rhea" id="RHEA:12104"/>
        <dbReference type="ChEBI" id="CHEBI:15636"/>
        <dbReference type="ChEBI" id="CHEBI:57451"/>
        <dbReference type="ChEBI" id="CHEBI:63528"/>
        <dbReference type="ChEBI" id="CHEBI:246422"/>
        <dbReference type="EC" id="2.1.1.45"/>
    </reaction>
</comment>
<comment type="pathway">
    <text>Pyrimidine metabolism; dTTP biosynthesis.</text>
</comment>
<comment type="subunit">
    <text>Homodimer.</text>
</comment>
<comment type="similarity">
    <text evidence="2">Belongs to the thymidylate synthase family.</text>
</comment>
<feature type="chain" id="PRO_0000141063" description="Thymidylate synthase">
    <location>
        <begin position="1"/>
        <end position="294"/>
    </location>
</feature>
<feature type="active site" description="Nucleophile" evidence="1">
    <location>
        <position position="176"/>
    </location>
</feature>
<feature type="binding site" description="in other chain" evidence="1">
    <location>
        <position position="31"/>
    </location>
    <ligand>
        <name>dUMP</name>
        <dbReference type="ChEBI" id="CHEBI:246422"/>
        <note>ligand shared between dimeric partners</note>
    </ligand>
</feature>
<feature type="binding site" evidence="1">
    <location>
        <begin position="156"/>
        <end position="157"/>
    </location>
    <ligand>
        <name>dUMP</name>
        <dbReference type="ChEBI" id="CHEBI:246422"/>
        <note>ligand shared between dimeric partners</note>
    </ligand>
</feature>
<feature type="binding site" description="in other chain" evidence="1">
    <location>
        <begin position="196"/>
        <end position="199"/>
    </location>
    <ligand>
        <name>dUMP</name>
        <dbReference type="ChEBI" id="CHEBI:246422"/>
        <note>ligand shared between dimeric partners</note>
    </ligand>
</feature>
<feature type="binding site" evidence="1">
    <location>
        <position position="199"/>
    </location>
    <ligand>
        <name>(6R)-5,10-methylene-5,6,7,8-tetrahydrofolate</name>
        <dbReference type="ChEBI" id="CHEBI:15636"/>
    </ligand>
</feature>
<feature type="binding site" description="in other chain" evidence="1">
    <location>
        <position position="207"/>
    </location>
    <ligand>
        <name>dUMP</name>
        <dbReference type="ChEBI" id="CHEBI:246422"/>
        <note>ligand shared between dimeric partners</note>
    </ligand>
</feature>
<feature type="binding site" description="in other chain" evidence="1">
    <location>
        <begin position="237"/>
        <end position="239"/>
    </location>
    <ligand>
        <name>dUMP</name>
        <dbReference type="ChEBI" id="CHEBI:246422"/>
        <note>ligand shared between dimeric partners</note>
    </ligand>
</feature>
<feature type="binding site" evidence="1">
    <location>
        <position position="293"/>
    </location>
    <ligand>
        <name>(6R)-5,10-methylene-5,6,7,8-tetrahydrofolate</name>
        <dbReference type="ChEBI" id="CHEBI:15636"/>
    </ligand>
</feature>
<feature type="sequence conflict" description="In Ref. 2; AAA46174." evidence="2" ref="2">
    <original>P</original>
    <variation>L</variation>
    <location>
        <position position="226"/>
    </location>
</feature>
<dbReference type="EC" id="2.1.1.45"/>
<dbReference type="EMBL" id="X64346">
    <property type="protein sequence ID" value="CAA45693.1"/>
    <property type="molecule type" value="Genomic_DNA"/>
</dbReference>
<dbReference type="EMBL" id="M14080">
    <property type="protein sequence ID" value="AAA46174.1"/>
    <property type="molecule type" value="Genomic_DNA"/>
</dbReference>
<dbReference type="EMBL" id="M13190">
    <property type="protein sequence ID" value="AAA46175.1"/>
    <property type="molecule type" value="Genomic_DNA"/>
</dbReference>
<dbReference type="EMBL" id="M86409">
    <property type="protein sequence ID" value="AAA46146.1"/>
    <property type="molecule type" value="Genomic_DNA"/>
</dbReference>
<dbReference type="RefSeq" id="NP_040272.1">
    <property type="nucleotide sequence ID" value="NC_001350.1"/>
</dbReference>
<dbReference type="SMR" id="P06854"/>
<dbReference type="KEGG" id="vg:1682482"/>
<dbReference type="UniPathway" id="UPA00575"/>
<dbReference type="Proteomes" id="UP000000587">
    <property type="component" value="Segment"/>
</dbReference>
<dbReference type="GO" id="GO:0004799">
    <property type="term" value="F:thymidylate synthase activity"/>
    <property type="evidence" value="ECO:0007669"/>
    <property type="project" value="UniProtKB-EC"/>
</dbReference>
<dbReference type="GO" id="GO:0006231">
    <property type="term" value="P:dTMP biosynthetic process"/>
    <property type="evidence" value="ECO:0007669"/>
    <property type="project" value="InterPro"/>
</dbReference>
<dbReference type="GO" id="GO:0006235">
    <property type="term" value="P:dTTP biosynthetic process"/>
    <property type="evidence" value="ECO:0007669"/>
    <property type="project" value="UniProtKB-UniPathway"/>
</dbReference>
<dbReference type="GO" id="GO:0032259">
    <property type="term" value="P:methylation"/>
    <property type="evidence" value="ECO:0007669"/>
    <property type="project" value="UniProtKB-KW"/>
</dbReference>
<dbReference type="CDD" id="cd00351">
    <property type="entry name" value="TS_Pyrimidine_HMase"/>
    <property type="match status" value="1"/>
</dbReference>
<dbReference type="FunFam" id="3.30.572.10:FF:000002">
    <property type="entry name" value="Possible thymidylate synthase"/>
    <property type="match status" value="1"/>
</dbReference>
<dbReference type="Gene3D" id="3.30.572.10">
    <property type="entry name" value="Thymidylate synthase/dCMP hydroxymethylase domain"/>
    <property type="match status" value="1"/>
</dbReference>
<dbReference type="HAMAP" id="MF_00008">
    <property type="entry name" value="Thymidy_synth_bact"/>
    <property type="match status" value="1"/>
</dbReference>
<dbReference type="InterPro" id="IPR045097">
    <property type="entry name" value="Thymidate_synth/dCMP_Mease"/>
</dbReference>
<dbReference type="InterPro" id="IPR023451">
    <property type="entry name" value="Thymidate_synth/dCMP_Mease_dom"/>
</dbReference>
<dbReference type="InterPro" id="IPR036926">
    <property type="entry name" value="Thymidate_synth/dCMP_Mease_sf"/>
</dbReference>
<dbReference type="InterPro" id="IPR000398">
    <property type="entry name" value="Thymidylate_synthase"/>
</dbReference>
<dbReference type="InterPro" id="IPR020940">
    <property type="entry name" value="Thymidylate_synthase_AS"/>
</dbReference>
<dbReference type="NCBIfam" id="NF002497">
    <property type="entry name" value="PRK01827.1-3"/>
    <property type="match status" value="1"/>
</dbReference>
<dbReference type="NCBIfam" id="TIGR03284">
    <property type="entry name" value="thym_sym"/>
    <property type="match status" value="1"/>
</dbReference>
<dbReference type="PANTHER" id="PTHR11548:SF2">
    <property type="entry name" value="THYMIDYLATE SYNTHASE"/>
    <property type="match status" value="1"/>
</dbReference>
<dbReference type="PANTHER" id="PTHR11548">
    <property type="entry name" value="THYMIDYLATE SYNTHASE 1"/>
    <property type="match status" value="1"/>
</dbReference>
<dbReference type="Pfam" id="PF00303">
    <property type="entry name" value="Thymidylat_synt"/>
    <property type="match status" value="1"/>
</dbReference>
<dbReference type="PRINTS" id="PR00108">
    <property type="entry name" value="THYMDSNTHASE"/>
</dbReference>
<dbReference type="SUPFAM" id="SSF55831">
    <property type="entry name" value="Thymidylate synthase/dCMP hydroxymethylase"/>
    <property type="match status" value="1"/>
</dbReference>
<dbReference type="PROSITE" id="PS00091">
    <property type="entry name" value="THYMIDYLATE_SYNTHASE"/>
    <property type="match status" value="1"/>
</dbReference>
<organism>
    <name type="scientific">Saimiriine herpesvirus 2 (strain 11)</name>
    <name type="common">SaHV-2</name>
    <name type="synonym">Herpesvirus saimiri</name>
    <dbReference type="NCBI Taxonomy" id="10383"/>
    <lineage>
        <taxon>Viruses</taxon>
        <taxon>Duplodnaviria</taxon>
        <taxon>Heunggongvirae</taxon>
        <taxon>Peploviricota</taxon>
        <taxon>Herviviricetes</taxon>
        <taxon>Herpesvirales</taxon>
        <taxon>Orthoherpesviridae</taxon>
        <taxon>Gammaherpesvirinae</taxon>
        <taxon>Rhadinovirus</taxon>
        <taxon>Rhadinovirus saimiriinegamma2</taxon>
        <taxon>Saimiriine herpesvirus 2</taxon>
    </lineage>
</organism>
<sequence>MSTHTEEQHGEHQYLSQVQHILNYGSFKNDRTGTGTLSIFGTQSRFSLENEFPLLTTKRVFWRGVVEELLWFIRGSTDSKELSAAGVHIWDANGSRSFLDKLGFYDRDEGDLGPVYGFQWRHFGAEYKGVGRDYKGEGVDQLKQLIDTIKTNPTDRRMLMCAWNVSDIPKMVLPPCHVLSQFYVCDGKLSCQLYQRSADMGLGVPFNIASYSLLTCMIAHVTNLVPGEFIHTIGDAHIYVDHIDALKMQLTRTPRPFPTLRFARNVSCIDDFKADDIILENYNPHPIIKMHMAV</sequence>
<keyword id="KW-0489">Methyltransferase</keyword>
<keyword id="KW-0545">Nucleotide biosynthesis</keyword>
<keyword id="KW-1185">Reference proteome</keyword>
<keyword id="KW-0808">Transferase</keyword>
<proteinExistence type="inferred from homology"/>
<name>TYSY_SHV21</name>